<name>POLS_WEEV</name>
<keyword id="KW-0002">3D-structure</keyword>
<keyword id="KW-0167">Capsid protein</keyword>
<keyword id="KW-0165">Cleavage on pair of basic residues</keyword>
<keyword id="KW-0903">Direct protein sequencing</keyword>
<keyword id="KW-1015">Disulfide bond</keyword>
<keyword id="KW-1262">Eukaryotic host gene expression shutoff by virus</keyword>
<keyword id="KW-1191">Eukaryotic host transcription shutoff by virus</keyword>
<keyword id="KW-1170">Fusion of virus membrane with host endosomal membrane</keyword>
<keyword id="KW-1168">Fusion of virus membrane with host membrane</keyword>
<keyword id="KW-0325">Glycoprotein</keyword>
<keyword id="KW-1032">Host cell membrane</keyword>
<keyword id="KW-1035">Host cytoplasm</keyword>
<keyword id="KW-1038">Host endoplasmic reticulum</keyword>
<keyword id="KW-1190">Host gene expression shutoff by virus</keyword>
<keyword id="KW-1040">Host Golgi apparatus</keyword>
<keyword id="KW-1043">Host membrane</keyword>
<keyword id="KW-1048">Host nucleus</keyword>
<keyword id="KW-0945">Host-virus interaction</keyword>
<keyword id="KW-0378">Hydrolase</keyword>
<keyword id="KW-0407">Ion channel</keyword>
<keyword id="KW-0406">Ion transport</keyword>
<keyword id="KW-0449">Lipoprotein</keyword>
<keyword id="KW-0472">Membrane</keyword>
<keyword id="KW-0564">Palmitate</keyword>
<keyword id="KW-0597">Phosphoprotein</keyword>
<keyword id="KW-0645">Protease</keyword>
<keyword id="KW-0694">RNA-binding</keyword>
<keyword id="KW-0720">Serine protease</keyword>
<keyword id="KW-1144">T=4 icosahedral capsid protein</keyword>
<keyword id="KW-0812">Transmembrane</keyword>
<keyword id="KW-1133">Transmembrane helix</keyword>
<keyword id="KW-0813">Transport</keyword>
<keyword id="KW-1161">Viral attachment to host cell</keyword>
<keyword id="KW-1234">Viral attachment to host entry receptor</keyword>
<keyword id="KW-1182">Viral ion channel</keyword>
<keyword id="KW-1162">Viral penetration into host cytoplasm</keyword>
<keyword id="KW-0946">Virion</keyword>
<keyword id="KW-1160">Virus entry into host cell</keyword>
<reference key="1">
    <citation type="journal article" date="1988" name="Proc. Natl. Acad. Sci. U.S.A.">
        <title>Western equine encephalitis virus is a recombinant virus.</title>
        <authorList>
            <person name="Hahn C.S."/>
            <person name="Lustig S."/>
            <person name="Strauss E.G."/>
            <person name="Strauss J.H."/>
        </authorList>
    </citation>
    <scope>NUCLEOTIDE SEQUENCE [GENOMIC RNA]</scope>
    <source>
        <strain>BFS1703</strain>
    </source>
</reference>
<reference key="2">
    <citation type="journal article" date="1984" name="Proc. Natl. Acad. Sci. U.S.A.">
        <title>An evolutionary tree relating eight alphaviruses, based on amino-terminal sequences of their glycoproteins.</title>
        <authorList>
            <person name="Bell J.R."/>
            <person name="Kinney R.M."/>
            <person name="Trent D.W."/>
            <person name="Strauss E.G."/>
            <person name="Strauss J.H."/>
        </authorList>
    </citation>
    <scope>PROTEIN SEQUENCE OF 320-385 AND 798-862</scope>
</reference>
<reference key="3">
    <citation type="journal article" date="2024" name="Nature">
        <title>Shifts in receptors during submergence of an encephalitic arbovirus.</title>
        <authorList>
            <person name="Li W."/>
            <person name="Plante J.A."/>
            <person name="Lin C."/>
            <person name="Basu H."/>
            <person name="Plung J.S."/>
            <person name="Fan X."/>
            <person name="Boeckers J.M."/>
            <person name="Oros J."/>
            <person name="Buck T.K."/>
            <person name="Anekal P.V."/>
            <person name="Hanson W.A."/>
            <person name="Varnum H."/>
            <person name="Wells A."/>
            <person name="Mann C.J."/>
            <person name="Tjang L.V."/>
            <person name="Yang P."/>
            <person name="Reyna R.A."/>
            <person name="Mitchell B.M."/>
            <person name="Shinde D.P."/>
            <person name="Walker J.L."/>
            <person name="Choi S.Y."/>
            <person name="Brusic V."/>
            <person name="Llopis P.M."/>
            <person name="Weaver S.C."/>
            <person name="Umemori H."/>
            <person name="Chiu I.M."/>
            <person name="Plante K.S."/>
            <person name="Abraham J."/>
        </authorList>
    </citation>
    <scope>INTERACTION WITH HOST PCDH10 (SPIKE GLYCOPROTEIN E2)</scope>
    <scope>FUNCTION (SPIKE GLYCOPROTEIN E2)</scope>
    <scope>INTERACTION WITH HOST VLDLR AND LRP8/APOER2 (SPIKE GLYCOPROTEIN E2)</scope>
    <source>
        <strain>71V</strain>
        <strain>California</strain>
        <strain>CBA87</strain>
        <strain>CU71-CPA</strain>
        <strain>Fleming</strain>
        <strain>McMillan</strain>
        <strain>Y62-33</strain>
    </source>
</reference>
<reference evidence="17 19 20 21 22" key="4">
    <citation type="journal article" date="2023" name="Cell">
        <title>Vaccine elicitation and structural basis for antibody protection against alphaviruses.</title>
        <authorList>
            <person name="Sutton M.S."/>
            <person name="Pletnev S."/>
            <person name="Callahan V."/>
            <person name="Ko S."/>
            <person name="Tsybovsky Y."/>
            <person name="Bylund T."/>
            <person name="Casner R.G."/>
            <person name="Cerutti G."/>
            <person name="Gardner C.L."/>
            <person name="Guirguis V."/>
            <person name="Verardi R."/>
            <person name="Zhang B."/>
            <person name="Ambrozak D."/>
            <person name="Beddall M."/>
            <person name="Lei H."/>
            <person name="Yang E.S."/>
            <person name="Liu T."/>
            <person name="Henry A.R."/>
            <person name="Rawi R."/>
            <person name="Schon A."/>
            <person name="Schramm C.A."/>
            <person name="Shen C.H."/>
            <person name="Shi W."/>
            <person name="Stephens T."/>
            <person name="Yang Y."/>
            <person name="Florez M.B."/>
            <person name="Ledgerwood J.E."/>
            <person name="Burke C.W."/>
            <person name="Shapiro L."/>
            <person name="Fox J.M."/>
            <person name="Kwong P.D."/>
            <person name="Roederer M."/>
        </authorList>
    </citation>
    <scope>STRUCTURE BY ELECTRON MICROSCOPY (3.40 ANGSTROMS) OF 1-259; 320-737 AND 798-1236</scope>
    <scope>DISULFIDE BONDS</scope>
</reference>
<reference evidence="23" key="5">
    <citation type="journal article" date="2023" name="Cell">
        <title>Vertebrate-class-specific binding modes of the alphavirus receptor MXRA8.</title>
        <authorList>
            <person name="Zimmerman O."/>
            <person name="Zimmerman M.I."/>
            <person name="Raju S."/>
            <person name="Nelson C.A."/>
            <person name="Errico J.M."/>
            <person name="Madden E.A."/>
            <person name="Holmes A.C."/>
            <person name="Hassan A.O."/>
            <person name="VanBlargan L.A."/>
            <person name="Kim A.S."/>
            <person name="Adams L.J."/>
            <person name="Basore K."/>
            <person name="Whitener B.M."/>
            <person name="Palakurty S."/>
            <person name="Davis-Adams H.G."/>
            <person name="Sun C."/>
            <person name="Gilliland T."/>
            <person name="Earnest J.T."/>
            <person name="Ma H."/>
            <person name="Ebel G.D."/>
            <person name="Zmasek C."/>
            <person name="Scheuermann R.H."/>
            <person name="Klimstra W.B."/>
            <person name="Fremont D.H."/>
            <person name="Diamond M.S."/>
        </authorList>
    </citation>
    <scope>STRUCTURE BY ELECTRON MICROSCOPY (3.89 ANGSTROMS) OF 321-735 AND 798-1235</scope>
    <scope>DISULFIDE BONDS</scope>
</reference>
<organism>
    <name type="scientific">Western equine encephalitis virus</name>
    <name type="common">WEEV</name>
    <dbReference type="NCBI Taxonomy" id="11039"/>
    <lineage>
        <taxon>Viruses</taxon>
        <taxon>Riboviria</taxon>
        <taxon>Orthornavirae</taxon>
        <taxon>Kitrinoviricota</taxon>
        <taxon>Alsuviricetes</taxon>
        <taxon>Martellivirales</taxon>
        <taxon>Togaviridae</taxon>
        <taxon>Alphavirus</taxon>
    </lineage>
</organism>
<sequence length="1236" mass="136082">MFPYPQLNFPPVYPTNPMAYRDPNPPRCRWRPFRPPLAAQIEDLRRSIANLTFKQRSPNPPPGPPPKKKKSAPKPKPTQPKKKKQQAKKTKRKPKPGKRQRMCMKLESDKTFPIMLNGQVNGYACVVGGRLMKPLHVEGKIDNEQLAAVKLKKASMYDLEYGDVPQNMKSDTLQYTSDKPPGFYNWHHGAVQYENGRFTVPRGVGGKGDSGRPILDNRGRVVAIVLGGANEGTRTALSVVTWNQKGVTIKDTPEGSEPWSLVTALCVLSNVTFPCDKPPVCYSLAPERTLDVLEENVDNPNYDTLLENVLKCPSRRPKRSITDDFTLTSPYLGFCPYCRHSAPCFSPIKIENVWDESDDGSIRIQVSAQFGYNQAGTADVTKFRYMSFDHDHDIKEDSMDKIAISTSGPCRRLGHKGYFLLAQCPPGDSVTVSITSGASENSCTVEKKIRRKFVGREEYLFPPVHGKLVKCHVYDHLKETSAGYITMHRPGPHAYKSYLEEASGEVYIKPPSGKNVTYECKCGDYSTGIVSTRTKMNGCTKAKQCIAYKSDQTKWVFNSPDLIRHTDHSVQGKLHIPFRLTPTVCPVPLAHTPTVTKWFKGITLHLTATRPTLLTTRKLGLRADATAEWITGTTSRNFSVGREGLEYVWGNHEPVRVWAQESAPGDPHGWPHEIIIHYYHRHPVYTVIVLCGVALAILVGTASSAACIAKARRDCLTPYALAPNATVPTALAVLCCIRPTNAETFGETLNHLWFNNQPFLWAQLCIPLAALVILFRCFSCCMPFLLVAGVCLGKVDAFEHATTVPNVPGIPYKALVERAGYAPLNLEITVVSSELTPSTNKEYVTCRFHTVIPSPQVKCCGSLECKASSKADYTCRVFGGVYPFMWGGAQCFCDSENTQLSEAYVEFAPDCTIDHAVALKVHTAALKVGLRIVYGNTTAHLDTFVNGVTPGSSRDLKVIAGPISAAFSPFDHKVVIRKGLVYNYDFPEYGAMKPGAFGDIQASSLDATDIVARTDIRLLKPSVKNIHVPYTQAVSGYEMWKNNSGRPLQETAPFGCKIEVEPLRASNCAYGHIPISIDIPDAAFVRSSESPTILEVSCTVADCIYSADFGGSLTLQYKADREGHCPVHSHSTTAVLKEATTHVTAVGSITLHFSTSSPQANFIVSLCGKKTTCNAECKPPADHIIGEPHKVDQEFQAAVSKTSWNWLLALFGGASSLIVVGLIVLVCSSMLINTRR</sequence>
<dbReference type="EC" id="3.4.21.90" evidence="1"/>
<dbReference type="EMBL" id="J03854">
    <property type="protein sequence ID" value="AAA42999.1"/>
    <property type="molecule type" value="Genomic_RNA"/>
</dbReference>
<dbReference type="PIR" id="A35587">
    <property type="entry name" value="VHWVWE"/>
</dbReference>
<dbReference type="PDB" id="8DEC">
    <property type="method" value="EM"/>
    <property type="resolution" value="4.70 A"/>
    <property type="chains" value="A/F/J/N=798-1236, B/G/K/O=320-737, E/I/M/R=1-259"/>
</dbReference>
<dbReference type="PDB" id="8DED">
    <property type="method" value="EM"/>
    <property type="resolution" value="4.10 A"/>
    <property type="chains" value="A/F/J=798-1236, B/G/K=320-737"/>
</dbReference>
<dbReference type="PDB" id="8DEE">
    <property type="method" value="EM"/>
    <property type="resolution" value="3.40 A"/>
    <property type="chains" value="A/F/J/N=798-1236, B/G/K/O=320-737, E/I/M/R=1-259"/>
</dbReference>
<dbReference type="PDB" id="8DEF">
    <property type="method" value="EM"/>
    <property type="resolution" value="4.20 A"/>
    <property type="chains" value="A/F/J=798-1236, B/G/K=320-737"/>
</dbReference>
<dbReference type="PDB" id="8DUL">
    <property type="method" value="EM"/>
    <property type="resolution" value="4.17 A"/>
    <property type="chains" value="A/F/J=738-1226, B/G/K=330-737"/>
</dbReference>
<dbReference type="PDB" id="8DUN">
    <property type="method" value="EM"/>
    <property type="resolution" value="5.84 A"/>
    <property type="chains" value="A/F/J=738-1226, B/G/K=330-737"/>
</dbReference>
<dbReference type="PDB" id="8SQN">
    <property type="method" value="EM"/>
    <property type="resolution" value="3.89 A"/>
    <property type="chains" value="B/F/J/N=798-1235, D/H/L/P=321-735"/>
</dbReference>
<dbReference type="PDBsum" id="8DEC"/>
<dbReference type="PDBsum" id="8DED"/>
<dbReference type="PDBsum" id="8DEE"/>
<dbReference type="PDBsum" id="8DEF"/>
<dbReference type="PDBsum" id="8DUL"/>
<dbReference type="PDBsum" id="8DUN"/>
<dbReference type="PDBsum" id="8SQN"/>
<dbReference type="EMDB" id="EMD-27389"/>
<dbReference type="EMDB" id="EMD-27390"/>
<dbReference type="EMDB" id="EMD-27391"/>
<dbReference type="EMDB" id="EMD-27392"/>
<dbReference type="EMDB" id="EMD-27722"/>
<dbReference type="EMDB" id="EMD-27723"/>
<dbReference type="SMR" id="P13897"/>
<dbReference type="IntAct" id="P13897">
    <property type="interactions" value="1"/>
</dbReference>
<dbReference type="MEROPS" id="S03.001"/>
<dbReference type="ABCD" id="P13897">
    <property type="antibodies" value="7 sequenced antibodies"/>
</dbReference>
<dbReference type="Proteomes" id="UP000007630">
    <property type="component" value="Genome"/>
</dbReference>
<dbReference type="GO" id="GO:0030430">
    <property type="term" value="C:host cell cytoplasm"/>
    <property type="evidence" value="ECO:0007669"/>
    <property type="project" value="UniProtKB-SubCell"/>
</dbReference>
<dbReference type="GO" id="GO:0042025">
    <property type="term" value="C:host cell nucleus"/>
    <property type="evidence" value="ECO:0007669"/>
    <property type="project" value="UniProtKB-SubCell"/>
</dbReference>
<dbReference type="GO" id="GO:0020002">
    <property type="term" value="C:host cell plasma membrane"/>
    <property type="evidence" value="ECO:0007669"/>
    <property type="project" value="UniProtKB-SubCell"/>
</dbReference>
<dbReference type="GO" id="GO:0016020">
    <property type="term" value="C:membrane"/>
    <property type="evidence" value="ECO:0007669"/>
    <property type="project" value="UniProtKB-KW"/>
</dbReference>
<dbReference type="GO" id="GO:0039619">
    <property type="term" value="C:T=4 icosahedral viral capsid"/>
    <property type="evidence" value="ECO:0007669"/>
    <property type="project" value="UniProtKB-KW"/>
</dbReference>
<dbReference type="GO" id="GO:0055036">
    <property type="term" value="C:virion membrane"/>
    <property type="evidence" value="ECO:0007669"/>
    <property type="project" value="UniProtKB-SubCell"/>
</dbReference>
<dbReference type="GO" id="GO:0003723">
    <property type="term" value="F:RNA binding"/>
    <property type="evidence" value="ECO:0007669"/>
    <property type="project" value="UniProtKB-KW"/>
</dbReference>
<dbReference type="GO" id="GO:0004252">
    <property type="term" value="F:serine-type endopeptidase activity"/>
    <property type="evidence" value="ECO:0007669"/>
    <property type="project" value="InterPro"/>
</dbReference>
<dbReference type="GO" id="GO:0005198">
    <property type="term" value="F:structural molecule activity"/>
    <property type="evidence" value="ECO:0007669"/>
    <property type="project" value="InterPro"/>
</dbReference>
<dbReference type="GO" id="GO:0039654">
    <property type="term" value="P:fusion of virus membrane with host endosome membrane"/>
    <property type="evidence" value="ECO:0007669"/>
    <property type="project" value="UniProtKB-KW"/>
</dbReference>
<dbReference type="GO" id="GO:0006508">
    <property type="term" value="P:proteolysis"/>
    <property type="evidence" value="ECO:0007669"/>
    <property type="project" value="UniProtKB-KW"/>
</dbReference>
<dbReference type="GO" id="GO:0046718">
    <property type="term" value="P:symbiont entry into host cell"/>
    <property type="evidence" value="ECO:0007669"/>
    <property type="project" value="UniProtKB-KW"/>
</dbReference>
<dbReference type="GO" id="GO:0039657">
    <property type="term" value="P:symbiont-mediated suppression of host gene expression"/>
    <property type="evidence" value="ECO:0007669"/>
    <property type="project" value="UniProtKB-KW"/>
</dbReference>
<dbReference type="GO" id="GO:0039722">
    <property type="term" value="P:symbiont-mediated suppression of host toll-like receptor signaling pathway"/>
    <property type="evidence" value="ECO:0000250"/>
    <property type="project" value="UniProtKB"/>
</dbReference>
<dbReference type="GO" id="GO:0019062">
    <property type="term" value="P:virion attachment to host cell"/>
    <property type="evidence" value="ECO:0007669"/>
    <property type="project" value="UniProtKB-KW"/>
</dbReference>
<dbReference type="FunFam" id="2.40.10.10:FF:000075">
    <property type="entry name" value="Structural polyprotein"/>
    <property type="match status" value="1"/>
</dbReference>
<dbReference type="FunFam" id="2.40.10.10:FF:000076">
    <property type="entry name" value="Structural polyprotein"/>
    <property type="match status" value="1"/>
</dbReference>
<dbReference type="Gene3D" id="1.10.287.2230">
    <property type="match status" value="1"/>
</dbReference>
<dbReference type="Gene3D" id="2.60.40.350">
    <property type="match status" value="1"/>
</dbReference>
<dbReference type="Gene3D" id="2.60.40.3200">
    <property type="entry name" value="Alphavirus E2 glycoprotein, A domain"/>
    <property type="match status" value="1"/>
</dbReference>
<dbReference type="Gene3D" id="2.60.40.4310">
    <property type="entry name" value="Alphavirus E2 glycoprotein, domain B"/>
    <property type="match status" value="1"/>
</dbReference>
<dbReference type="Gene3D" id="2.60.40.2400">
    <property type="entry name" value="Alphavirus E2 glycoprotein, domain C"/>
    <property type="match status" value="1"/>
</dbReference>
<dbReference type="Gene3D" id="2.60.98.10">
    <property type="entry name" value="Tick-borne Encephalitis virus Glycoprotein, domain 1"/>
    <property type="match status" value="3"/>
</dbReference>
<dbReference type="Gene3D" id="2.40.10.10">
    <property type="entry name" value="Trypsin-like serine proteases"/>
    <property type="match status" value="2"/>
</dbReference>
<dbReference type="InterPro" id="IPR002548">
    <property type="entry name" value="Alpha_E1_glycop"/>
</dbReference>
<dbReference type="InterPro" id="IPR000936">
    <property type="entry name" value="Alpha_E2_glycop"/>
</dbReference>
<dbReference type="InterPro" id="IPR002533">
    <property type="entry name" value="Alpha_E3_glycop"/>
</dbReference>
<dbReference type="InterPro" id="IPR042304">
    <property type="entry name" value="Alphavir_E2_A"/>
</dbReference>
<dbReference type="InterPro" id="IPR042305">
    <property type="entry name" value="Alphavir_E2_B"/>
</dbReference>
<dbReference type="InterPro" id="IPR042306">
    <property type="entry name" value="Alphavir_E2_C"/>
</dbReference>
<dbReference type="InterPro" id="IPR000336">
    <property type="entry name" value="Flavivir/Alphavir_Ig-like_sf"/>
</dbReference>
<dbReference type="InterPro" id="IPR036253">
    <property type="entry name" value="Glycoprot_cen/dimer_sf"/>
</dbReference>
<dbReference type="InterPro" id="IPR038055">
    <property type="entry name" value="Glycoprot_E_dimer_dom"/>
</dbReference>
<dbReference type="InterPro" id="IPR014756">
    <property type="entry name" value="Ig_E-set"/>
</dbReference>
<dbReference type="InterPro" id="IPR009003">
    <property type="entry name" value="Peptidase_S1_PA"/>
</dbReference>
<dbReference type="InterPro" id="IPR043504">
    <property type="entry name" value="Peptidase_S1_PA_chymotrypsin"/>
</dbReference>
<dbReference type="InterPro" id="IPR000930">
    <property type="entry name" value="Peptidase_S3"/>
</dbReference>
<dbReference type="Pfam" id="PF01589">
    <property type="entry name" value="Alpha_E1_glycop"/>
    <property type="match status" value="1"/>
</dbReference>
<dbReference type="Pfam" id="PF00943">
    <property type="entry name" value="Alpha_E2_glycop"/>
    <property type="match status" value="1"/>
</dbReference>
<dbReference type="Pfam" id="PF01563">
    <property type="entry name" value="Alpha_E3_glycop"/>
    <property type="match status" value="1"/>
</dbReference>
<dbReference type="Pfam" id="PF00944">
    <property type="entry name" value="Peptidase_S3"/>
    <property type="match status" value="1"/>
</dbReference>
<dbReference type="PRINTS" id="PR00798">
    <property type="entry name" value="TOGAVIRIN"/>
</dbReference>
<dbReference type="SUPFAM" id="SSF81296">
    <property type="entry name" value="E set domains"/>
    <property type="match status" value="1"/>
</dbReference>
<dbReference type="SUPFAM" id="SSF50494">
    <property type="entry name" value="Trypsin-like serine proteases"/>
    <property type="match status" value="1"/>
</dbReference>
<dbReference type="SUPFAM" id="SSF56983">
    <property type="entry name" value="Viral glycoprotein, central and dimerisation domains"/>
    <property type="match status" value="1"/>
</dbReference>
<dbReference type="PROSITE" id="PS51690">
    <property type="entry name" value="ALPHAVIRUS_CP"/>
    <property type="match status" value="1"/>
</dbReference>
<accession>P13897</accession>
<accession>Q88696</accession>
<accession>Q88697</accession>
<accession>Q88698</accession>
<accession>Q88699</accession>
<accession>Q88700</accession>
<organismHost>
    <name type="scientific">Aedes</name>
    <dbReference type="NCBI Taxonomy" id="7158"/>
</organismHost>
<organismHost>
    <name type="scientific">Anopheles</name>
    <dbReference type="NCBI Taxonomy" id="7164"/>
</organismHost>
<organismHost>
    <name type="scientific">Culex tarsalis</name>
    <name type="common">Encephalitis mosquito</name>
    <dbReference type="NCBI Taxonomy" id="7177"/>
</organismHost>
<organismHost>
    <name type="scientific">Haemorhous mexicanus</name>
    <name type="common">House finch</name>
    <name type="synonym">Carpodacus mexicanus</name>
    <dbReference type="NCBI Taxonomy" id="30427"/>
</organismHost>
<organismHost>
    <name type="scientific">Homo sapiens</name>
    <name type="common">Human</name>
    <dbReference type="NCBI Taxonomy" id="9606"/>
</organismHost>
<organismHost>
    <name type="scientific">Lepus americanus</name>
    <name type="common">Snowshoe hare</name>
    <dbReference type="NCBI Taxonomy" id="48086"/>
</organismHost>
<organismHost>
    <name type="scientific">Lithobates pipiens</name>
    <name type="common">Northern leopard frog</name>
    <name type="synonym">Rana pipiens</name>
    <dbReference type="NCBI Taxonomy" id="8404"/>
</organismHost>
<organismHost>
    <name type="scientific">Passer domesticus</name>
    <name type="common">House sparrow</name>
    <name type="synonym">Fringilla domestica</name>
    <dbReference type="NCBI Taxonomy" id="48849"/>
</organismHost>
<organismHost>
    <name type="scientific">Thamnophis</name>
    <dbReference type="NCBI Taxonomy" id="34999"/>
</organismHost>
<organismHost>
    <name type="scientific">Urocitellus richardsonii</name>
    <name type="common">Richardson's ground squirrel</name>
    <name type="synonym">Spermophilus richardsonii</name>
    <dbReference type="NCBI Taxonomy" id="37591"/>
</organismHost>
<comment type="function">
    <molecule>Capsid protein</molecule>
    <text evidence="1 2 4 5 6">Forms an icosahedral capsid with a T=4 symmetry composed of 240 copies of the capsid protein surrounded by a lipid membrane through which penetrate 80 spikes composed of trimers of E1-E2 heterodimers (By similarity). The capsid protein binds to the viral RNA genome at a site adjacent to a ribosome binding site for viral genome translation following genome release (By similarity). Possesses a protease activity that results in its autocatalytic cleavage from the nascent structural protein (By similarity). Following its self-cleavage, the capsid protein transiently associates with ribosomes, and within several minutes the protein binds to viral RNA and rapidly assembles into icosahedric core particles (By similarity). The resulting nucleocapsid eventually associates with the cytoplasmic domain of the spike glycoprotein E2 at the cell membrane, leading to budding and formation of mature virions (By similarity). In case of infection, new virions attach to target cells and after clathrin-mediated endocytosis their membrane fuses with the host endosomal membrane (By similarity). This leads to the release of the nucleocapsid into the cytoplasm, followed by an uncoating event necessary for the genomic RNA to become accessible (By similarity). The uncoating might be triggered by the interaction of capsid proteins with ribosomes (By similarity). Binding of ribosomes would release the genomic RNA since the same region is genomic RNA-binding and ribosome-binding (By similarity). Specifically inhibits interleukin-1 receptor-associated kinase 1/IRAK1-dependent signaling during viral entry, representing a means by which the alphaviruses may evade innate immune detection and activation prior to viral gene expression (By similarity). Inhibits host transcription (By similarity). Forms a tetrameric complex with XPO1/CRM1 and the nuclear import receptor importin (By similarity). This complex blocks the central channel of host nuclear pores thereby inhibiting the receptor-mediated nuclear transport and thus the host mRNA and rRNA transcription (By similarity). The inhibition of transcription is linked to a cytopathic effect on the host cell (By similarity).</text>
</comment>
<comment type="function">
    <molecule>Assembly protein E3</molecule>
    <text evidence="1">Provides the signal sequence for the translocation of the precursor of protein E3/E2 to the host endoplasmic reticulum. Furin-cleaved E3 remains associated with spike glycoprotein E1 and mediates pH protection of the latter during the transport via the secretory pathway. After virion release from the host cell, the assembly protein E3 is gradually released in the extracellular space.</text>
</comment>
<comment type="function">
    <molecule>Spike glycoprotein E2</molecule>
    <text evidence="2 14 16">Plays an essential role in viral attachment to target host cell, by binding to the cell receptor PCDH10 (Probable). Some specific strains may also bind host receptors VLDLR and LRP8/APOER2 (PubMed:39048821). Synthesized as a pE2 precursor which is processed by furin at the cell membrane just before virion budding, giving rise to E2-E1 heterodimer. The pE2-E1 heterodimer is stable, whereas E2-E1 is unstable and dissociate at low pH. pE2 is processed at the last step, presumably to avoid E1 fusion activation before its final export to cell surface. E2 C-terminus contains a transitory transmembrane that would be disrupted by palmitoylation, resulting in reorientation of the C-terminal tail from lumenal to cytoplasmic side. This step is critical since E2 C-terminus is involved in budding by interacting with capsid proteins. This release of E2 C-terminus in cytoplasm occurs lately in protein export, and precludes premature assembly of particles at the endoplasmic reticulum membrane (By similarity).</text>
</comment>
<comment type="function">
    <text evidence="2">Protein 6K: Acts as a viroporin that participates in virus glycoprotein processing and transport to the plasma membrane, cell permeabilization and budding of viral particles. Disrupts the calcium homeostasis of the cell, probably at the endoplasmic reticulum level resulting in the increased levels of cytoplasmic calcium. Because of its lipophilic properties, the 6K protein is postulated to influence the selection of lipids that interact with the transmembrane domains of the glycoproteins, which, in turn, affects the deformability of the bilayer required for the extreme curvature that occurs as budding proceeds. Present in low amount in virions, about 3% compared to viral glycoproteins.</text>
</comment>
<comment type="function">
    <molecule>Spike glycoprotein E1</molecule>
    <text evidence="2">Class II viral fusion protein. Fusion activity is inactive as long as E1 is bound to E2 in mature virion. After virus attachment to target cell receptor PCDH10 and endocytosis, acidification of the endosome induce dissociation of E1/E2 heterodimer and concomitant trimerization of the E1 subunits. This E1 trimer is fusion active, and promotes release of viral nucleocapsid in cytoplasm after endosome and viral membrane fusion. Efficient fusion requires the presence of cholesterol and sphingolipid in the target membrane.</text>
</comment>
<comment type="catalytic activity">
    <reaction evidence="2">
        <text>Autocatalytic release of the core protein from the N-terminus of the togavirus structural polyprotein by hydrolysis of a -Trp-|-Ser- bond.</text>
        <dbReference type="EC" id="3.4.21.90"/>
    </reaction>
</comment>
<comment type="subunit">
    <molecule>Capsid protein</molecule>
    <text evidence="2 4 9 10">Homodimer (By similarity). Homomultimer (By similarity). Interacts with host karyopherin KPNA4; this interaction allows the nuclear import of the viral capsid protein (By similarity). Interacts with spike glycoprotein E2 (By similarity). Interacts with host IRAK1; the interaction leads to inhibition of IRAK1-dependent signaling (By similarity). Part of a tetrameric complex composed of host CRM1, host importin alpha/beta dimer and the viral capsid; this complex blocks the receptor-mediated transport through the nuclear pore (By similarity). Interacts with host phosphatase PPP1CA; this interaction dephosphorylates the capsid protein, which increases its ability to bind to the viral genome (By similarity).</text>
</comment>
<comment type="subunit">
    <molecule>Precursor of protein E3/E2</molecule>
    <text evidence="1 2 4">The precursor of protein E3/E2 and E1 form a heterodimer shortly after synthesis (By similarity).</text>
</comment>
<comment type="subunit">
    <molecule>Spike glycoprotein E1</molecule>
    <text evidence="2 10">Interacts with spike glycoprotein E2 (By similarity). The precursor of protein E3/E2 and E1 form a heterodimer shortly after synthesis (By similarity). Processing of the precursor of protein E3/E2 into E2 and E3 results in a heterodimer of the spike glycoproteins E2 and E1 (By similarity). Spike at virion surface are constituted of three E2-E1 heterodimers (By similarity). After target cell attachment and endocytosis, E1 change conformation to form homotrimers (By similarity). Interacts with 6K protein (By similarity).</text>
</comment>
<comment type="subunit">
    <molecule>Spike glycoprotein E2</molecule>
    <text evidence="2 14">Interacts with spike glycoprotein E1 (By similarity). Processing of the precursor of protein E3/E2 into E2 and E3 results in a heterodimer of the spike glycoproteins E2 and E1 (By similarity). Spike at virion surface are constituted of a trimer of E2-E1 heterodimers (By similarity). Interacts with 6K protein (By similarity). The E2-E1 heterodimer interacts with host PCDH10 (via domain Cadherin 1); this interaction mediates viral entry to the host cell (PubMed:39048821).</text>
</comment>
<comment type="subunit">
    <molecule>6K protein</molecule>
    <text evidence="2 7">Oligomer (By similarity). Interacts with spike glycoprotein E1. Interacts with spike glycoprotein E2 (By similarity).</text>
</comment>
<comment type="subcellular location">
    <molecule>Capsid protein</molecule>
    <subcellularLocation>
        <location evidence="2">Virion</location>
    </subcellularLocation>
    <subcellularLocation>
        <location evidence="4">Host cytoplasm</location>
    </subcellularLocation>
    <subcellularLocation>
        <location evidence="2">Host cell membrane</location>
    </subcellularLocation>
    <subcellularLocation>
        <location evidence="4">Host nucleus</location>
    </subcellularLocation>
</comment>
<comment type="subcellular location">
    <molecule>Spike glycoprotein E2</molecule>
    <subcellularLocation>
        <location evidence="10">Virion membrane</location>
        <topology evidence="11">Single-pass type I membrane protein</topology>
    </subcellularLocation>
    <subcellularLocation>
        <location evidence="2">Host cell membrane</location>
        <topology evidence="10">Single-pass type I membrane protein</topology>
    </subcellularLocation>
</comment>
<comment type="subcellular location">
    <molecule>6K protein</molecule>
    <subcellularLocation>
        <location evidence="2">Host cell membrane</location>
        <topology evidence="11">Multi-pass membrane protein</topology>
    </subcellularLocation>
    <subcellularLocation>
        <location evidence="2">Virion membrane</location>
        <topology evidence="11">Multi-pass membrane protein</topology>
    </subcellularLocation>
    <subcellularLocation>
        <location evidence="2">Host Golgi apparatus</location>
    </subcellularLocation>
    <subcellularLocation>
        <location>Host Golgi apparatus</location>
        <location>Host trans-Golgi network</location>
    </subcellularLocation>
    <subcellularLocation>
        <location evidence="2">Host endoplasmic reticulum</location>
    </subcellularLocation>
</comment>
<comment type="subcellular location">
    <molecule>Spike glycoprotein E1</molecule>
    <subcellularLocation>
        <location evidence="10">Virion membrane</location>
        <topology evidence="11">Single-pass type I membrane protein</topology>
    </subcellularLocation>
    <subcellularLocation>
        <location evidence="2 10">Host cell membrane</location>
        <topology evidence="11">Single-pass type I membrane protein</topology>
    </subcellularLocation>
</comment>
<comment type="domain">
    <text evidence="1">Structural polyprotein: As soon as the capsid protein has been autocleaved, an internal uncleaved signal peptide directs the remaining polyprotein to the endoplasmic reticulum.</text>
</comment>
<comment type="domain">
    <molecule>Capsid protein</molecule>
    <text evidence="2 4">The very N-terminus plays a role in the particle assembly process (By similarity). The N-terminus also contains a nuclear localization signal and a supraphysiological nuclear export signal (supraNES), which is an unusually strong NES that mediates host CRM1 binding in the absence of RanGTP and thus can bind CRM1, not only in the nucleus, but also in the cytoplasm (By similarity). The C-terminus functions as a protease during translation to cleave itself from the translating structural polyprotein (By similarity).</text>
</comment>
<comment type="PTM">
    <text evidence="1">Structural polyprotein: Specific enzymatic cleavages in vivo yield mature proteins. Capsid protein is auto-cleaved during polyprotein translation, unmasking a signal peptide at the N-terminus of the precursor of E3/E2. The remaining polyprotein is then targeted to the host endoplasmic reticulum, where host signal peptidase cleaves it into pE2, 6K and E1 proteins. pE2 is further processed to mature E3 and E2 by host furin in trans-Golgi vesicle.</text>
</comment>
<comment type="PTM">
    <molecule>Capsid protein</molecule>
    <text evidence="4">Phosphorylated on serine and threonine residues.</text>
</comment>
<comment type="PTM">
    <molecule>Spike glycoprotein E2</molecule>
    <text evidence="1">Palmitoylated via thioester bonds. These palmitoylations may induce disruption of the C-terminus transmembrane. This would result in the reorientation of E2 C-terminus from lumenal to cytoplasmic side.</text>
</comment>
<comment type="PTM">
    <molecule>Spike glycoprotein E1</molecule>
    <text evidence="1">N-glycosylated.</text>
</comment>
<comment type="PTM">
    <molecule>Spike glycoprotein E2</molecule>
    <text evidence="1">N-glycosylated.</text>
</comment>
<comment type="PTM">
    <molecule>Assembly protein E3</molecule>
    <text evidence="1">N-glycosylated.</text>
</comment>
<comment type="PTM">
    <molecule>6K protein</molecule>
    <text evidence="1">Palmitoylated via thioester bonds.</text>
</comment>
<comment type="miscellaneous">
    <text evidence="9">Structural polyprotein: Translated from a subgenomic RNA synthesized during togavirus replication.</text>
</comment>
<proteinExistence type="evidence at protein level"/>
<feature type="chain" id="PRO_0000041327" description="Capsid protein">
    <location>
        <begin position="1"/>
        <end position="259"/>
    </location>
</feature>
<feature type="chain" id="PRO_0000234326" description="Precursor of protein E3/E2">
    <location>
        <begin position="260"/>
        <end position="742"/>
    </location>
</feature>
<feature type="chain" id="PRO_0000041328" description="Assembly protein E3">
    <location>
        <begin position="260"/>
        <end position="319"/>
    </location>
</feature>
<feature type="chain" id="PRO_0000041329" description="Spike glycoprotein E2">
    <location>
        <begin position="320"/>
        <end position="742"/>
    </location>
</feature>
<feature type="chain" id="PRO_0000041330" description="6K protein">
    <location>
        <begin position="743"/>
        <end position="797"/>
    </location>
</feature>
<feature type="chain" id="PRO_0000041331" description="Spike glycoprotein E1">
    <location>
        <begin position="798"/>
        <end position="1236"/>
    </location>
</feature>
<feature type="topological domain" description="Extracellular" evidence="11">
    <location>
        <begin position="260"/>
        <end position="687"/>
    </location>
</feature>
<feature type="transmembrane region" description="Helical" evidence="11">
    <location>
        <begin position="688"/>
        <end position="708"/>
    </location>
</feature>
<feature type="topological domain" description="Cytoplasmic" evidence="11">
    <location>
        <begin position="709"/>
        <end position="742"/>
    </location>
</feature>
<feature type="topological domain" description="Extracellular" evidence="11">
    <location>
        <begin position="743"/>
        <end position="767"/>
    </location>
</feature>
<feature type="transmembrane region" description="Helical" evidence="11">
    <location>
        <begin position="768"/>
        <end position="788"/>
    </location>
</feature>
<feature type="transmembrane region" description="Helical" evidence="11">
    <location>
        <begin position="789"/>
        <end position="809"/>
    </location>
</feature>
<feature type="topological domain" description="Extracellular" evidence="11">
    <location>
        <begin position="810"/>
        <end position="1205"/>
    </location>
</feature>
<feature type="transmembrane region" description="Helical" evidence="11">
    <location>
        <begin position="1206"/>
        <end position="1226"/>
    </location>
</feature>
<feature type="topological domain" description="Cytoplasmic" evidence="11">
    <location>
        <begin position="1227"/>
        <end position="1236"/>
    </location>
</feature>
<feature type="domain" description="Peptidase S3" evidence="12">
    <location>
        <begin position="110"/>
        <end position="259"/>
    </location>
</feature>
<feature type="region of interest" description="Necessary for nucleocapsid assembly and virus assembly" evidence="4">
    <location>
        <begin position="1"/>
        <end position="36"/>
    </location>
</feature>
<feature type="region of interest" description="Host transcription inhibition" evidence="4">
    <location>
        <begin position="37"/>
        <end position="70"/>
    </location>
</feature>
<feature type="region of interest" description="Disordered" evidence="13">
    <location>
        <begin position="44"/>
        <end position="103"/>
    </location>
</feature>
<feature type="region of interest" description="Binding to the viral RNA" evidence="5">
    <location>
        <begin position="83"/>
        <end position="111"/>
    </location>
</feature>
<feature type="region of interest" description="Ribosome-binding" evidence="5">
    <location>
        <begin position="96"/>
        <end position="110"/>
    </location>
</feature>
<feature type="region of interest" description="Interaction with spike glycoprotein E2" evidence="2">
    <location>
        <begin position="152"/>
        <end position="157"/>
    </location>
</feature>
<feature type="region of interest" description="Interaction with spike glycoprotein E2" evidence="2">
    <location>
        <begin position="244"/>
        <end position="248"/>
    </location>
</feature>
<feature type="region of interest" description="Functions as an uncleaved signal peptide for the precursor of protein E3/E2" evidence="1">
    <location>
        <begin position="260"/>
        <end position="271"/>
    </location>
</feature>
<feature type="region of interest" description="Interaction with the capsid protein" evidence="2">
    <location>
        <begin position="710"/>
        <end position="714"/>
    </location>
</feature>
<feature type="region of interest" description="Transient transmembrane before p62-6K protein processing" evidence="11">
    <location>
        <begin position="717"/>
        <end position="737"/>
    </location>
</feature>
<feature type="region of interest" description="E1 fusion peptide loop" evidence="10">
    <location>
        <begin position="881"/>
        <end position="898"/>
    </location>
</feature>
<feature type="short sequence motif" description="Supraphysiological nuclear export signal" evidence="4">
    <location>
        <begin position="44"/>
        <end position="51"/>
    </location>
</feature>
<feature type="short sequence motif" description="Nuclear localization signal" evidence="4">
    <location>
        <begin position="67"/>
        <end position="70"/>
    </location>
</feature>
<feature type="compositionally biased region" description="Basic residues" evidence="13">
    <location>
        <begin position="66"/>
        <end position="102"/>
    </location>
</feature>
<feature type="active site" description="Charge relay system" evidence="12">
    <location>
        <position position="136"/>
    </location>
</feature>
<feature type="active site" description="Charge relay system" evidence="12">
    <location>
        <position position="158"/>
    </location>
</feature>
<feature type="active site" description="Charge relay system" evidence="12">
    <location>
        <position position="210"/>
    </location>
</feature>
<feature type="site" description="Involved in dimerization of the capsid protein" evidence="9">
    <location>
        <position position="184"/>
    </location>
</feature>
<feature type="site" description="Involved in dimerization of the capsid protein" evidence="9">
    <location>
        <position position="217"/>
    </location>
</feature>
<feature type="site" description="Cleavage; by autolysis" evidence="1">
    <location>
        <begin position="259"/>
        <end position="260"/>
    </location>
</feature>
<feature type="site" description="Cleavage; by host furin" evidence="1">
    <location>
        <begin position="319"/>
        <end position="320"/>
    </location>
</feature>
<feature type="site" description="Cleavage; by host signal peptidase" evidence="1">
    <location>
        <begin position="742"/>
        <end position="743"/>
    </location>
</feature>
<feature type="site" description="Cleavage; by host signal peptidase" evidence="1">
    <location>
        <begin position="797"/>
        <end position="798"/>
    </location>
</feature>
<feature type="modified residue" description="Phosphoserine" evidence="4">
    <location>
        <position position="108"/>
    </location>
</feature>
<feature type="modified residue" description="Phosphothreonine" evidence="4">
    <location>
        <position position="111"/>
    </location>
</feature>
<feature type="lipid moiety-binding region" description="S-palmitoyl cysteine; by host" evidence="2">
    <location>
        <position position="715"/>
    </location>
</feature>
<feature type="lipid moiety-binding region" description="S-palmitoyl cysteine; by host" evidence="8">
    <location>
        <position position="735"/>
    </location>
</feature>
<feature type="lipid moiety-binding region" description="S-palmitoyl cysteine; by host" evidence="8">
    <location>
        <position position="736"/>
    </location>
</feature>
<feature type="glycosylation site" description="N-linked (GlcNAc...) asparagine; by host" evidence="11">
    <location>
        <position position="270"/>
    </location>
</feature>
<feature type="glycosylation site" description="N-linked (GlcNAc...) asparagine; by host" evidence="11">
    <location>
        <position position="515"/>
    </location>
</feature>
<feature type="glycosylation site" description="N-linked (GlcNAc...) asparagine; by host" evidence="11">
    <location>
        <position position="637"/>
    </location>
</feature>
<feature type="glycosylation site" description="N-linked (GlcNAc...) asparagine; by host" evidence="11">
    <location>
        <position position="936"/>
    </location>
</feature>
<feature type="glycosylation site" description="N-linked (GlcNAc...) asparagine; by host" evidence="11">
    <location>
        <position position="1042"/>
    </location>
</feature>
<feature type="glycosylation site" description="N-linked (GlcNAc...) asparagine; by host" evidence="8">
    <location>
        <position position="1067"/>
    </location>
</feature>
<feature type="disulfide bond" evidence="3">
    <location>
        <begin position="266"/>
        <end position="275"/>
    </location>
</feature>
<feature type="disulfide bond" evidence="18 19 20 21 22 23">
    <location>
        <begin position="335"/>
        <end position="443"/>
    </location>
</feature>
<feature type="disulfide bond" evidence="17 19 20 21 22 23">
    <location>
        <begin position="338"/>
        <end position="344"/>
    </location>
</feature>
<feature type="disulfide bond" evidence="17 19 20 21 22 23">
    <location>
        <begin position="410"/>
        <end position="424"/>
    </location>
</feature>
<feature type="disulfide bond" evidence="17 19 20 21 22 23">
    <location>
        <begin position="471"/>
        <end position="585"/>
    </location>
</feature>
<feature type="disulfide bond" evidence="17 19 20 21 22 23">
    <location>
        <begin position="520"/>
        <end position="545"/>
    </location>
</feature>
<feature type="disulfide bond" evidence="17 19 20 21 22 23">
    <location>
        <begin position="522"/>
        <end position="539"/>
    </location>
</feature>
<feature type="disulfide bond" evidence="7">
    <location>
        <begin position="715"/>
        <end position="736"/>
    </location>
</feature>
<feature type="disulfide bond" evidence="17 19 20 21 22 23">
    <location>
        <begin position="846"/>
        <end position="911"/>
    </location>
</feature>
<feature type="disulfide bond" evidence="17 19 20 21 22 23">
    <location>
        <begin position="859"/>
        <end position="891"/>
    </location>
</feature>
<feature type="disulfide bond" evidence="17 19 20 21 22 23">
    <location>
        <begin position="860"/>
        <end position="893"/>
    </location>
</feature>
<feature type="disulfide bond" evidence="21 23">
    <location>
        <begin position="865"/>
        <end position="875"/>
    </location>
</feature>
<feature type="disulfide bond" evidence="17 19 20 21 22 23">
    <location>
        <begin position="1056"/>
        <end position="1068"/>
    </location>
</feature>
<feature type="disulfide bond" evidence="17 19 20 22 23">
    <location>
        <begin position="1098"/>
        <end position="1173"/>
    </location>
</feature>
<feature type="disulfide bond" evidence="17 19 20 22 23">
    <location>
        <begin position="1103"/>
        <end position="1177"/>
    </location>
</feature>
<feature type="disulfide bond" evidence="17 19 20 22 23">
    <location>
        <begin position="1125"/>
        <end position="1167"/>
    </location>
</feature>
<feature type="sequence conflict" description="In Ref. 2; AA sequence." evidence="15" ref="2">
    <original>S</original>
    <variation>T</variation>
    <location>
        <position position="361"/>
    </location>
</feature>
<feature type="sequence conflict" description="In Ref. 2; AA sequence." evidence="15" ref="2">
    <original>R</original>
    <variation>K</variation>
    <location>
        <position position="847"/>
    </location>
</feature>
<feature type="sequence conflict" description="In Ref. 2; AA sequence." evidence="15" ref="2">
    <original>H</original>
    <variation>T</variation>
    <location>
        <position position="849"/>
    </location>
</feature>
<feature type="sequence conflict" description="In Ref. 2; AA sequence." evidence="15" ref="2">
    <original>S</original>
    <variation>A</variation>
    <location>
        <position position="862"/>
    </location>
</feature>
<feature type="turn" evidence="24">
    <location>
        <begin position="108"/>
        <end position="110"/>
    </location>
</feature>
<feature type="strand" evidence="24">
    <location>
        <begin position="111"/>
        <end position="116"/>
    </location>
</feature>
<feature type="strand" evidence="24">
    <location>
        <begin position="119"/>
        <end position="127"/>
    </location>
</feature>
<feature type="strand" evidence="24">
    <location>
        <begin position="130"/>
        <end position="137"/>
    </location>
</feature>
<feature type="strand" evidence="24">
    <location>
        <begin position="140"/>
        <end position="142"/>
    </location>
</feature>
<feature type="helix" evidence="24">
    <location>
        <begin position="144"/>
        <end position="147"/>
    </location>
</feature>
<feature type="strand" evidence="24">
    <location>
        <begin position="152"/>
        <end position="154"/>
    </location>
</feature>
<feature type="turn" evidence="24">
    <location>
        <begin position="155"/>
        <end position="158"/>
    </location>
</feature>
<feature type="strand" evidence="24">
    <location>
        <begin position="159"/>
        <end position="163"/>
    </location>
</feature>
<feature type="turn" evidence="24">
    <location>
        <begin position="166"/>
        <end position="168"/>
    </location>
</feature>
<feature type="strand" evidence="24">
    <location>
        <begin position="169"/>
        <end position="173"/>
    </location>
</feature>
<feature type="strand" evidence="24">
    <location>
        <begin position="181"/>
        <end position="186"/>
    </location>
</feature>
<feature type="strand" evidence="24">
    <location>
        <begin position="189"/>
        <end position="194"/>
    </location>
</feature>
<feature type="strand" evidence="24">
    <location>
        <begin position="197"/>
        <end position="201"/>
    </location>
</feature>
<feature type="strand" evidence="24">
    <location>
        <begin position="213"/>
        <end position="215"/>
    </location>
</feature>
<feature type="strand" evidence="24">
    <location>
        <begin position="221"/>
        <end position="230"/>
    </location>
</feature>
<feature type="strand" evidence="24">
    <location>
        <begin position="232"/>
        <end position="242"/>
    </location>
</feature>
<feature type="strand" evidence="24">
    <location>
        <begin position="248"/>
        <end position="251"/>
    </location>
</feature>
<feature type="strand" evidence="24">
    <location>
        <begin position="333"/>
        <end position="337"/>
    </location>
</feature>
<feature type="strand" evidence="24">
    <location>
        <begin position="339"/>
        <end position="342"/>
    </location>
</feature>
<feature type="strand" evidence="24">
    <location>
        <begin position="344"/>
        <end position="346"/>
    </location>
</feature>
<feature type="strand" evidence="24">
    <location>
        <begin position="350"/>
        <end position="354"/>
    </location>
</feature>
<feature type="strand" evidence="24">
    <location>
        <begin position="360"/>
        <end position="372"/>
    </location>
</feature>
<feature type="strand" evidence="24">
    <location>
        <begin position="380"/>
        <end position="386"/>
    </location>
</feature>
<feature type="strand" evidence="24">
    <location>
        <begin position="388"/>
        <end position="391"/>
    </location>
</feature>
<feature type="strand" evidence="24">
    <location>
        <begin position="394"/>
        <end position="398"/>
    </location>
</feature>
<feature type="helix" evidence="24">
    <location>
        <begin position="399"/>
        <end position="401"/>
    </location>
</feature>
<feature type="strand" evidence="24">
    <location>
        <begin position="402"/>
        <end position="409"/>
    </location>
</feature>
<feature type="strand" evidence="24">
    <location>
        <begin position="411"/>
        <end position="423"/>
    </location>
</feature>
<feature type="strand" evidence="24">
    <location>
        <begin position="426"/>
        <end position="436"/>
    </location>
</feature>
<feature type="strand" evidence="24">
    <location>
        <begin position="439"/>
        <end position="449"/>
    </location>
</feature>
<feature type="strand" evidence="24">
    <location>
        <begin position="454"/>
        <end position="457"/>
    </location>
</feature>
<feature type="strand" evidence="24">
    <location>
        <begin position="464"/>
        <end position="474"/>
    </location>
</feature>
<feature type="strand" evidence="24">
    <location>
        <begin position="484"/>
        <end position="488"/>
    </location>
</feature>
<feature type="strand" evidence="24">
    <location>
        <begin position="499"/>
        <end position="502"/>
    </location>
</feature>
<feature type="strand" evidence="24">
    <location>
        <begin position="505"/>
        <end position="508"/>
    </location>
</feature>
<feature type="strand" evidence="24">
    <location>
        <begin position="516"/>
        <end position="530"/>
    </location>
</feature>
<feature type="strand" evidence="24">
    <location>
        <begin position="534"/>
        <end position="538"/>
    </location>
</feature>
<feature type="helix" evidence="24">
    <location>
        <begin position="542"/>
        <end position="544"/>
    </location>
</feature>
<feature type="strand" evidence="24">
    <location>
        <begin position="545"/>
        <end position="549"/>
    </location>
</feature>
<feature type="strand" evidence="24">
    <location>
        <begin position="573"/>
        <end position="575"/>
    </location>
</feature>
<feature type="strand" evidence="24">
    <location>
        <begin position="580"/>
        <end position="587"/>
    </location>
</feature>
<feature type="strand" evidence="24">
    <location>
        <begin position="594"/>
        <end position="598"/>
    </location>
</feature>
<feature type="strand" evidence="24">
    <location>
        <begin position="601"/>
        <end position="621"/>
    </location>
</feature>
<feature type="strand" evidence="24">
    <location>
        <begin position="626"/>
        <end position="638"/>
    </location>
</feature>
<feature type="strand" evidence="24">
    <location>
        <begin position="645"/>
        <end position="649"/>
    </location>
</feature>
<feature type="strand" evidence="24">
    <location>
        <begin position="655"/>
        <end position="659"/>
    </location>
</feature>
<feature type="strand" evidence="24">
    <location>
        <begin position="667"/>
        <end position="669"/>
    </location>
</feature>
<feature type="helix" evidence="24">
    <location>
        <begin position="671"/>
        <end position="681"/>
    </location>
</feature>
<feature type="helix" evidence="24">
    <location>
        <begin position="683"/>
        <end position="716"/>
    </location>
</feature>
<feature type="turn" evidence="24">
    <location>
        <begin position="717"/>
        <end position="721"/>
    </location>
</feature>
<feature type="strand" evidence="24">
    <location>
        <begin position="722"/>
        <end position="724"/>
    </location>
</feature>
<feature type="helix" evidence="24">
    <location>
        <begin position="729"/>
        <end position="735"/>
    </location>
</feature>
<feature type="strand" evidence="24">
    <location>
        <begin position="799"/>
        <end position="805"/>
    </location>
</feature>
<feature type="strand" evidence="24">
    <location>
        <begin position="812"/>
        <end position="816"/>
    </location>
</feature>
<feature type="strand" evidence="24">
    <location>
        <begin position="819"/>
        <end position="821"/>
    </location>
</feature>
<feature type="strand" evidence="24">
    <location>
        <begin position="824"/>
        <end position="836"/>
    </location>
</feature>
<feature type="strand" evidence="24">
    <location>
        <begin position="839"/>
        <end position="845"/>
    </location>
</feature>
<feature type="strand" evidence="24">
    <location>
        <begin position="848"/>
        <end position="851"/>
    </location>
</feature>
<feature type="strand" evidence="24">
    <location>
        <begin position="870"/>
        <end position="878"/>
    </location>
</feature>
<feature type="strand" evidence="24">
    <location>
        <begin position="884"/>
        <end position="888"/>
    </location>
</feature>
<feature type="strand" evidence="24">
    <location>
        <begin position="894"/>
        <end position="896"/>
    </location>
</feature>
<feature type="strand" evidence="24">
    <location>
        <begin position="899"/>
        <end position="907"/>
    </location>
</feature>
<feature type="helix" evidence="24">
    <location>
        <begin position="909"/>
        <end position="912"/>
    </location>
</feature>
<feature type="strand" evidence="24">
    <location>
        <begin position="916"/>
        <end position="921"/>
    </location>
</feature>
<feature type="strand" evidence="24">
    <location>
        <begin position="925"/>
        <end position="934"/>
    </location>
</feature>
<feature type="strand" evidence="24">
    <location>
        <begin position="937"/>
        <end position="953"/>
    </location>
</feature>
<feature type="strand" evidence="24">
    <location>
        <begin position="956"/>
        <end position="960"/>
    </location>
</feature>
<feature type="strand" evidence="24">
    <location>
        <begin position="972"/>
        <end position="977"/>
    </location>
</feature>
<feature type="strand" evidence="24">
    <location>
        <begin position="980"/>
        <end position="982"/>
    </location>
</feature>
<feature type="strand" evidence="24">
    <location>
        <begin position="999"/>
        <end position="1004"/>
    </location>
</feature>
<feature type="strand" evidence="24">
    <location>
        <begin position="1023"/>
        <end position="1025"/>
    </location>
</feature>
<feature type="helix" evidence="24">
    <location>
        <begin position="1036"/>
        <end position="1042"/>
    </location>
</feature>
<feature type="helix" evidence="24">
    <location>
        <begin position="1048"/>
        <end position="1050"/>
    </location>
</feature>
<feature type="strand" evidence="24">
    <location>
        <begin position="1057"/>
        <end position="1059"/>
    </location>
</feature>
<feature type="turn" evidence="24">
    <location>
        <begin position="1060"/>
        <end position="1063"/>
    </location>
</feature>
<feature type="strand" evidence="24">
    <location>
        <begin position="1064"/>
        <end position="1067"/>
    </location>
</feature>
<feature type="strand" evidence="24">
    <location>
        <begin position="1071"/>
        <end position="1078"/>
    </location>
</feature>
<feature type="strand" evidence="24">
    <location>
        <begin position="1081"/>
        <end position="1083"/>
    </location>
</feature>
<feature type="turn" evidence="24">
    <location>
        <begin position="1087"/>
        <end position="1089"/>
    </location>
</feature>
<feature type="strand" evidence="24">
    <location>
        <begin position="1094"/>
        <end position="1104"/>
    </location>
</feature>
<feature type="strand" evidence="24">
    <location>
        <begin position="1106"/>
        <end position="1108"/>
    </location>
</feature>
<feature type="strand" evidence="24">
    <location>
        <begin position="1111"/>
        <end position="1118"/>
    </location>
</feature>
<feature type="strand" evidence="24">
    <location>
        <begin position="1126"/>
        <end position="1129"/>
    </location>
</feature>
<feature type="strand" evidence="24">
    <location>
        <begin position="1134"/>
        <end position="1137"/>
    </location>
</feature>
<feature type="strand" evidence="24">
    <location>
        <begin position="1145"/>
        <end position="1159"/>
    </location>
</feature>
<feature type="strand" evidence="24">
    <location>
        <begin position="1161"/>
        <end position="1166"/>
    </location>
</feature>
<feature type="strand" evidence="24">
    <location>
        <begin position="1169"/>
        <end position="1174"/>
    </location>
</feature>
<feature type="strand" evidence="24">
    <location>
        <begin position="1183"/>
        <end position="1187"/>
    </location>
</feature>
<feature type="helix" evidence="24">
    <location>
        <begin position="1196"/>
        <end position="1198"/>
    </location>
</feature>
<feature type="helix" evidence="24">
    <location>
        <begin position="1201"/>
        <end position="1234"/>
    </location>
</feature>
<evidence type="ECO:0000250" key="1">
    <source>
        <dbReference type="UniProtKB" id="P03315"/>
    </source>
</evidence>
<evidence type="ECO:0000250" key="2">
    <source>
        <dbReference type="UniProtKB" id="P03316"/>
    </source>
</evidence>
<evidence type="ECO:0000250" key="3">
    <source>
        <dbReference type="UniProtKB" id="P08768"/>
    </source>
</evidence>
<evidence type="ECO:0000250" key="4">
    <source>
        <dbReference type="UniProtKB" id="P09592"/>
    </source>
</evidence>
<evidence type="ECO:0000250" key="5">
    <source>
        <dbReference type="UniProtKB" id="P27284"/>
    </source>
</evidence>
<evidence type="ECO:0000250" key="6">
    <source>
        <dbReference type="UniProtKB" id="P36329"/>
    </source>
</evidence>
<evidence type="ECO:0000250" key="7">
    <source>
        <dbReference type="UniProtKB" id="Q5XXP3"/>
    </source>
</evidence>
<evidence type="ECO:0000250" key="8">
    <source>
        <dbReference type="UniProtKB" id="Q5Y388"/>
    </source>
</evidence>
<evidence type="ECO:0000250" key="9">
    <source>
        <dbReference type="UniProtKB" id="Q86925"/>
    </source>
</evidence>
<evidence type="ECO:0000250" key="10">
    <source>
        <dbReference type="UniProtKB" id="Q8JUX5"/>
    </source>
</evidence>
<evidence type="ECO:0000255" key="11"/>
<evidence type="ECO:0000255" key="12">
    <source>
        <dbReference type="PROSITE-ProRule" id="PRU01027"/>
    </source>
</evidence>
<evidence type="ECO:0000256" key="13">
    <source>
        <dbReference type="SAM" id="MobiDB-lite"/>
    </source>
</evidence>
<evidence type="ECO:0000269" key="14">
    <source>
    </source>
</evidence>
<evidence type="ECO:0000305" key="15"/>
<evidence type="ECO:0000305" key="16">
    <source>
    </source>
</evidence>
<evidence type="ECO:0007744" key="17">
    <source>
        <dbReference type="PDB" id="8DEC"/>
    </source>
</evidence>
<evidence type="ECO:0007744" key="18">
    <source>
        <dbReference type="PDB" id="8DED"/>
    </source>
</evidence>
<evidence type="ECO:0007744" key="19">
    <source>
        <dbReference type="PDB" id="8DEE"/>
    </source>
</evidence>
<evidence type="ECO:0007744" key="20">
    <source>
        <dbReference type="PDB" id="8DEF"/>
    </source>
</evidence>
<evidence type="ECO:0007744" key="21">
    <source>
        <dbReference type="PDB" id="8DUL"/>
    </source>
</evidence>
<evidence type="ECO:0007744" key="22">
    <source>
        <dbReference type="PDB" id="8DUN"/>
    </source>
</evidence>
<evidence type="ECO:0007744" key="23">
    <source>
        <dbReference type="PDB" id="8SQN"/>
    </source>
</evidence>
<evidence type="ECO:0007829" key="24">
    <source>
        <dbReference type="PDB" id="8DEE"/>
    </source>
</evidence>
<protein>
    <recommendedName>
        <fullName>Structural polyprotein</fullName>
    </recommendedName>
    <alternativeName>
        <fullName>p130</fullName>
    </alternativeName>
    <component>
        <recommendedName>
            <fullName>Capsid protein</fullName>
            <ecNumber evidence="1">3.4.21.90</ecNumber>
        </recommendedName>
        <alternativeName>
            <fullName>Coat protein</fullName>
            <shortName>C</shortName>
        </alternativeName>
    </component>
    <component>
        <recommendedName>
            <fullName>Precursor of protein E3/E2</fullName>
        </recommendedName>
        <alternativeName>
            <fullName>p62</fullName>
        </alternativeName>
        <alternativeName>
            <fullName>pE2</fullName>
        </alternativeName>
    </component>
    <component>
        <recommendedName>
            <fullName>Assembly protein E3</fullName>
        </recommendedName>
    </component>
    <component>
        <recommendedName>
            <fullName>Spike glycoprotein E2</fullName>
        </recommendedName>
        <alternativeName>
            <fullName>E2 envelope glycoprotein</fullName>
        </alternativeName>
    </component>
    <component>
        <recommendedName>
            <fullName>6K protein</fullName>
        </recommendedName>
    </component>
    <component>
        <recommendedName>
            <fullName>Spike glycoprotein E1</fullName>
        </recommendedName>
        <alternativeName>
            <fullName>E1 envelope glycoprotein</fullName>
        </alternativeName>
    </component>
</protein>